<comment type="similarity">
    <text evidence="1">Belongs to the aspartate-semialdehyde dehydrogenase family.</text>
</comment>
<reference key="1">
    <citation type="journal article" date="2000" name="Microbiology">
        <title>Identification of a novel gene, fimV, involved in twitching motility in Pseudomonas aeruginosa.</title>
        <authorList>
            <person name="Semmler A.B."/>
            <person name="Whitchurch C.B."/>
            <person name="Leech A.J."/>
            <person name="Mattick J.S."/>
        </authorList>
    </citation>
    <scope>NUCLEOTIDE SEQUENCE [GENOMIC DNA]</scope>
    <source>
        <strain>ATCC 15692 / DSM 22644 / CIP 104116 / JCM 14847 / LMG 12228 / 1C / PRS 101 / PAO1</strain>
    </source>
</reference>
<reference key="2">
    <citation type="journal article" date="2000" name="Nature">
        <title>Complete genome sequence of Pseudomonas aeruginosa PAO1, an opportunistic pathogen.</title>
        <authorList>
            <person name="Stover C.K."/>
            <person name="Pham X.-Q.T."/>
            <person name="Erwin A.L."/>
            <person name="Mizoguchi S.D."/>
            <person name="Warrener P."/>
            <person name="Hickey M.J."/>
            <person name="Brinkman F.S.L."/>
            <person name="Hufnagle W.O."/>
            <person name="Kowalik D.J."/>
            <person name="Lagrou M."/>
            <person name="Garber R.L."/>
            <person name="Goltry L."/>
            <person name="Tolentino E."/>
            <person name="Westbrock-Wadman S."/>
            <person name="Yuan Y."/>
            <person name="Brody L.L."/>
            <person name="Coulter S.N."/>
            <person name="Folger K.R."/>
            <person name="Kas A."/>
            <person name="Larbig K."/>
            <person name="Lim R.M."/>
            <person name="Smith K.A."/>
            <person name="Spencer D.H."/>
            <person name="Wong G.K.-S."/>
            <person name="Wu Z."/>
            <person name="Paulsen I.T."/>
            <person name="Reizer J."/>
            <person name="Saier M.H. Jr."/>
            <person name="Hancock R.E.W."/>
            <person name="Lory S."/>
            <person name="Olson M.V."/>
        </authorList>
    </citation>
    <scope>NUCLEOTIDE SEQUENCE [LARGE SCALE GENOMIC DNA]</scope>
    <source>
        <strain>ATCC 15692 / DSM 22644 / CIP 104116 / JCM 14847 / LMG 12228 / 1C / PRS 101 / PAO1</strain>
    </source>
</reference>
<name>USG_PSEAE</name>
<feature type="chain" id="PRO_0000141404" description="USG-1 protein homolog">
    <location>
        <begin position="1"/>
        <end position="336"/>
    </location>
</feature>
<feature type="sequence conflict" description="In Ref. 1; AAC23939." evidence="1" ref="1">
    <original>S</original>
    <variation>T</variation>
    <location>
        <position position="39"/>
    </location>
</feature>
<feature type="strand" evidence="2">
    <location>
        <begin position="7"/>
        <end position="10"/>
    </location>
</feature>
<feature type="turn" evidence="2">
    <location>
        <begin position="11"/>
        <end position="13"/>
    </location>
</feature>
<feature type="helix" evidence="2">
    <location>
        <begin position="15"/>
        <end position="26"/>
    </location>
</feature>
<feature type="strand" evidence="2">
    <location>
        <begin position="34"/>
        <end position="38"/>
    </location>
</feature>
<feature type="turn" evidence="2">
    <location>
        <begin position="40"/>
        <end position="44"/>
    </location>
</feature>
<feature type="strand" evidence="2">
    <location>
        <begin position="46"/>
        <end position="49"/>
    </location>
</feature>
<feature type="strand" evidence="2">
    <location>
        <begin position="52"/>
        <end position="55"/>
    </location>
</feature>
<feature type="helix" evidence="2">
    <location>
        <begin position="59"/>
        <end position="61"/>
    </location>
</feature>
<feature type="helix" evidence="2">
    <location>
        <begin position="64"/>
        <end position="66"/>
    </location>
</feature>
<feature type="strand" evidence="2">
    <location>
        <begin position="68"/>
        <end position="72"/>
    </location>
</feature>
<feature type="helix" evidence="2">
    <location>
        <begin position="76"/>
        <end position="88"/>
    </location>
</feature>
<feature type="strand" evidence="2">
    <location>
        <begin position="92"/>
        <end position="95"/>
    </location>
</feature>
<feature type="turn" evidence="2">
    <location>
        <begin position="99"/>
        <end position="104"/>
    </location>
</feature>
<feature type="helix" evidence="2">
    <location>
        <begin position="110"/>
        <end position="113"/>
    </location>
</feature>
<feature type="helix" evidence="2">
    <location>
        <begin position="114"/>
        <end position="119"/>
    </location>
</feature>
<feature type="strand" evidence="2">
    <location>
        <begin position="125"/>
        <end position="127"/>
    </location>
</feature>
<feature type="helix" evidence="2">
    <location>
        <begin position="131"/>
        <end position="143"/>
    </location>
</feature>
<feature type="turn" evidence="2">
    <location>
        <begin position="144"/>
        <end position="146"/>
    </location>
</feature>
<feature type="strand" evidence="2">
    <location>
        <begin position="149"/>
        <end position="158"/>
    </location>
</feature>
<feature type="helix" evidence="2">
    <location>
        <begin position="160"/>
        <end position="163"/>
    </location>
</feature>
<feature type="helix" evidence="2">
    <location>
        <begin position="165"/>
        <end position="179"/>
    </location>
</feature>
<feature type="strand" evidence="2">
    <location>
        <begin position="187"/>
        <end position="191"/>
    </location>
</feature>
<feature type="strand" evidence="2">
    <location>
        <begin position="198"/>
        <end position="202"/>
    </location>
</feature>
<feature type="helix" evidence="2">
    <location>
        <begin position="211"/>
        <end position="223"/>
    </location>
</feature>
<feature type="helix" evidence="2">
    <location>
        <begin position="225"/>
        <end position="227"/>
    </location>
</feature>
<feature type="strand" evidence="2">
    <location>
        <begin position="231"/>
        <end position="237"/>
    </location>
</feature>
<feature type="strand" evidence="2">
    <location>
        <begin position="244"/>
        <end position="254"/>
    </location>
</feature>
<feature type="helix" evidence="2">
    <location>
        <begin position="258"/>
        <end position="267"/>
    </location>
</feature>
<feature type="strand" evidence="2">
    <location>
        <begin position="271"/>
        <end position="273"/>
    </location>
</feature>
<feature type="helix" evidence="2">
    <location>
        <begin position="282"/>
        <end position="286"/>
    </location>
</feature>
<feature type="strand" evidence="2">
    <location>
        <begin position="292"/>
        <end position="299"/>
    </location>
</feature>
<feature type="strand" evidence="2">
    <location>
        <begin position="306"/>
        <end position="313"/>
    </location>
</feature>
<feature type="helix" evidence="2">
    <location>
        <begin position="315"/>
        <end position="320"/>
    </location>
</feature>
<feature type="helix" evidence="2">
    <location>
        <begin position="321"/>
        <end position="334"/>
    </location>
</feature>
<sequence>MSQPLNVAVVGATGSVGEALVGLLDERDFPLHRLHLLASAESAGQRMGFAESSLRVGDVDSFDFSSVGLAFFAAAAEVSRAHAERARAAGCSVIDLSGALEPSVAPPVMVSVNAERLASQAAPFLLSSPCAVAAELCEVLAPLLATLDCRQLNLTACLSVSSLGREGVKELARQTAELLNARPLEPRLFDRQIAFNLLAQVGAVDAEGHSAIERRIFAEVQALLGERIGPLNVTCIQAPVFFGDSLSVTLQCAEPVDLAAVTRVLDATKGIEWVGEGDYPTVVGDALGQDETYVGRVRAGQADPCQVNLWIVSDNVRKGAALNAVLLGELLIKHYL</sequence>
<protein>
    <recommendedName>
        <fullName>USG-1 protein homolog</fullName>
    </recommendedName>
</protein>
<evidence type="ECO:0000305" key="1"/>
<evidence type="ECO:0007829" key="2">
    <source>
        <dbReference type="PDB" id="2HJS"/>
    </source>
</evidence>
<gene>
    <name type="primary">usg</name>
    <name type="ordered locus">PA3116</name>
</gene>
<organism>
    <name type="scientific">Pseudomonas aeruginosa (strain ATCC 15692 / DSM 22644 / CIP 104116 / JCM 14847 / LMG 12228 / 1C / PRS 101 / PAO1)</name>
    <dbReference type="NCBI Taxonomy" id="208964"/>
    <lineage>
        <taxon>Bacteria</taxon>
        <taxon>Pseudomonadati</taxon>
        <taxon>Pseudomonadota</taxon>
        <taxon>Gammaproteobacteria</taxon>
        <taxon>Pseudomonadales</taxon>
        <taxon>Pseudomonadaceae</taxon>
        <taxon>Pseudomonas</taxon>
    </lineage>
</organism>
<keyword id="KW-0002">3D-structure</keyword>
<keyword id="KW-1185">Reference proteome</keyword>
<accession>O87014</accession>
<proteinExistence type="evidence at protein level"/>
<dbReference type="EMBL" id="U93274">
    <property type="protein sequence ID" value="AAC23939.1"/>
    <property type="molecule type" value="Genomic_DNA"/>
</dbReference>
<dbReference type="EMBL" id="AE004091">
    <property type="protein sequence ID" value="AAG06504.1"/>
    <property type="molecule type" value="Genomic_DNA"/>
</dbReference>
<dbReference type="PIR" id="B83255">
    <property type="entry name" value="B83255"/>
</dbReference>
<dbReference type="RefSeq" id="NP_251806.1">
    <property type="nucleotide sequence ID" value="NC_002516.2"/>
</dbReference>
<dbReference type="RefSeq" id="WP_003115016.1">
    <property type="nucleotide sequence ID" value="NZ_QZGE01000023.1"/>
</dbReference>
<dbReference type="PDB" id="2HJS">
    <property type="method" value="X-ray"/>
    <property type="resolution" value="2.20 A"/>
    <property type="chains" value="A=1-336"/>
</dbReference>
<dbReference type="PDBsum" id="2HJS"/>
<dbReference type="SMR" id="O87014"/>
<dbReference type="FunCoup" id="O87014">
    <property type="interactions" value="593"/>
</dbReference>
<dbReference type="STRING" id="208964.PA3116"/>
<dbReference type="PaxDb" id="208964-PA3116"/>
<dbReference type="DNASU" id="882802"/>
<dbReference type="GeneID" id="882802"/>
<dbReference type="KEGG" id="pae:PA3116"/>
<dbReference type="PATRIC" id="fig|208964.12.peg.3268"/>
<dbReference type="PseudoCAP" id="PA3116"/>
<dbReference type="HOGENOM" id="CLU_049966_2_0_6"/>
<dbReference type="InParanoid" id="O87014"/>
<dbReference type="OrthoDB" id="9805684at2"/>
<dbReference type="PhylomeDB" id="O87014"/>
<dbReference type="BioCyc" id="PAER208964:G1FZ6-3172-MONOMER"/>
<dbReference type="EvolutionaryTrace" id="O87014"/>
<dbReference type="Proteomes" id="UP000002438">
    <property type="component" value="Chromosome"/>
</dbReference>
<dbReference type="GO" id="GO:0051287">
    <property type="term" value="F:NAD binding"/>
    <property type="evidence" value="ECO:0007669"/>
    <property type="project" value="InterPro"/>
</dbReference>
<dbReference type="GO" id="GO:0016620">
    <property type="term" value="F:oxidoreductase activity, acting on the aldehyde or oxo group of donors, NAD or NADP as acceptor"/>
    <property type="evidence" value="ECO:0007669"/>
    <property type="project" value="InterPro"/>
</dbReference>
<dbReference type="GO" id="GO:0046983">
    <property type="term" value="F:protein dimerization activity"/>
    <property type="evidence" value="ECO:0007669"/>
    <property type="project" value="InterPro"/>
</dbReference>
<dbReference type="GO" id="GO:0008652">
    <property type="term" value="P:amino acid biosynthetic process"/>
    <property type="evidence" value="ECO:0007669"/>
    <property type="project" value="InterPro"/>
</dbReference>
<dbReference type="CDD" id="cd18124">
    <property type="entry name" value="ASADH_C_like"/>
    <property type="match status" value="1"/>
</dbReference>
<dbReference type="CDD" id="cd24147">
    <property type="entry name" value="ASADH_N_like"/>
    <property type="match status" value="1"/>
</dbReference>
<dbReference type="Gene3D" id="3.30.360.10">
    <property type="entry name" value="Dihydrodipicolinate Reductase, domain 2"/>
    <property type="match status" value="1"/>
</dbReference>
<dbReference type="Gene3D" id="3.40.50.720">
    <property type="entry name" value="NAD(P)-binding Rossmann-like Domain"/>
    <property type="match status" value="1"/>
</dbReference>
<dbReference type="InterPro" id="IPR036291">
    <property type="entry name" value="NAD(P)-bd_dom_sf"/>
</dbReference>
<dbReference type="InterPro" id="IPR000534">
    <property type="entry name" value="Semialdehyde_DH_NAD-bd"/>
</dbReference>
<dbReference type="InterPro" id="IPR012280">
    <property type="entry name" value="Semialdhyde_DH_dimer_dom"/>
</dbReference>
<dbReference type="NCBIfam" id="NF004224">
    <property type="entry name" value="PRK05671.1"/>
    <property type="match status" value="1"/>
</dbReference>
<dbReference type="NCBIfam" id="NF011456">
    <property type="entry name" value="PRK14874.1"/>
    <property type="match status" value="1"/>
</dbReference>
<dbReference type="PANTHER" id="PTHR46278:SF2">
    <property type="entry name" value="ASPARTATE-SEMIALDEHYDE DEHYDROGENASE"/>
    <property type="match status" value="1"/>
</dbReference>
<dbReference type="PANTHER" id="PTHR46278">
    <property type="entry name" value="DEHYDROGENASE, PUTATIVE-RELATED"/>
    <property type="match status" value="1"/>
</dbReference>
<dbReference type="Pfam" id="PF01118">
    <property type="entry name" value="Semialdhyde_dh"/>
    <property type="match status" value="1"/>
</dbReference>
<dbReference type="Pfam" id="PF02774">
    <property type="entry name" value="Semialdhyde_dhC"/>
    <property type="match status" value="1"/>
</dbReference>
<dbReference type="PIRSF" id="PIRSF000148">
    <property type="entry name" value="ASA_dh"/>
    <property type="match status" value="1"/>
</dbReference>
<dbReference type="SMART" id="SM00859">
    <property type="entry name" value="Semialdhyde_dh"/>
    <property type="match status" value="1"/>
</dbReference>
<dbReference type="SUPFAM" id="SSF55347">
    <property type="entry name" value="Glyceraldehyde-3-phosphate dehydrogenase-like, C-terminal domain"/>
    <property type="match status" value="1"/>
</dbReference>
<dbReference type="SUPFAM" id="SSF51735">
    <property type="entry name" value="NAD(P)-binding Rossmann-fold domains"/>
    <property type="match status" value="1"/>
</dbReference>